<proteinExistence type="inferred from homology"/>
<comment type="function">
    <text evidence="1">Protease with a carboxypeptidase B-like function involved in the C-terminal processing of the lysine and arginine residues from protein precursors. Promotes cell fusion and is involved in the programmed cell death (By similarity).</text>
</comment>
<comment type="catalytic activity">
    <reaction>
        <text>Preferential release of a C-terminal arginine or lysine residue.</text>
        <dbReference type="EC" id="3.4.16.6"/>
    </reaction>
</comment>
<comment type="subcellular location">
    <subcellularLocation>
        <location evidence="1">Golgi apparatus</location>
        <location evidence="1">trans-Golgi network membrane</location>
        <topology evidence="1">Single-pass type I membrane protein</topology>
    </subcellularLocation>
</comment>
<comment type="similarity">
    <text evidence="5">Belongs to the peptidase S10 family.</text>
</comment>
<organism>
    <name type="scientific">Zygosaccharomyces rouxii (strain ATCC 2623 / CBS 732 / NBRC 1130 / NCYC 568 / NRRL Y-229)</name>
    <dbReference type="NCBI Taxonomy" id="559307"/>
    <lineage>
        <taxon>Eukaryota</taxon>
        <taxon>Fungi</taxon>
        <taxon>Dikarya</taxon>
        <taxon>Ascomycota</taxon>
        <taxon>Saccharomycotina</taxon>
        <taxon>Saccharomycetes</taxon>
        <taxon>Saccharomycetales</taxon>
        <taxon>Saccharomycetaceae</taxon>
        <taxon>Zygosaccharomyces</taxon>
    </lineage>
</organism>
<reference key="1">
    <citation type="journal article" date="2009" name="Genome Res.">
        <title>Comparative genomics of protoploid Saccharomycetaceae.</title>
        <authorList>
            <consortium name="The Genolevures Consortium"/>
            <person name="Souciet J.-L."/>
            <person name="Dujon B."/>
            <person name="Gaillardin C."/>
            <person name="Johnston M."/>
            <person name="Baret P.V."/>
            <person name="Cliften P."/>
            <person name="Sherman D.J."/>
            <person name="Weissenbach J."/>
            <person name="Westhof E."/>
            <person name="Wincker P."/>
            <person name="Jubin C."/>
            <person name="Poulain J."/>
            <person name="Barbe V."/>
            <person name="Segurens B."/>
            <person name="Artiguenave F."/>
            <person name="Anthouard V."/>
            <person name="Vacherie B."/>
            <person name="Val M.-E."/>
            <person name="Fulton R.S."/>
            <person name="Minx P."/>
            <person name="Wilson R."/>
            <person name="Durrens P."/>
            <person name="Jean G."/>
            <person name="Marck C."/>
            <person name="Martin T."/>
            <person name="Nikolski M."/>
            <person name="Rolland T."/>
            <person name="Seret M.-L."/>
            <person name="Casaregola S."/>
            <person name="Despons L."/>
            <person name="Fairhead C."/>
            <person name="Fischer G."/>
            <person name="Lafontaine I."/>
            <person name="Leh V."/>
            <person name="Lemaire M."/>
            <person name="de Montigny J."/>
            <person name="Neuveglise C."/>
            <person name="Thierry A."/>
            <person name="Blanc-Lenfle I."/>
            <person name="Bleykasten C."/>
            <person name="Diffels J."/>
            <person name="Fritsch E."/>
            <person name="Frangeul L."/>
            <person name="Goeffon A."/>
            <person name="Jauniaux N."/>
            <person name="Kachouri-Lafond R."/>
            <person name="Payen C."/>
            <person name="Potier S."/>
            <person name="Pribylova L."/>
            <person name="Ozanne C."/>
            <person name="Richard G.-F."/>
            <person name="Sacerdot C."/>
            <person name="Straub M.-L."/>
            <person name="Talla E."/>
        </authorList>
    </citation>
    <scope>NUCLEOTIDE SEQUENCE [LARGE SCALE GENOMIC DNA]</scope>
    <source>
        <strain>ATCC 2623 / CBS 732 / BCRC 21506 / NBRC 1130 / NCYC 568 / NRRL Y-229</strain>
    </source>
</reference>
<dbReference type="EC" id="3.4.16.6"/>
<dbReference type="EMBL" id="CU928175">
    <property type="protein sequence ID" value="CAR26983.1"/>
    <property type="molecule type" value="Genomic_DNA"/>
</dbReference>
<dbReference type="RefSeq" id="XP_002495916.1">
    <property type="nucleotide sequence ID" value="XM_002495871.1"/>
</dbReference>
<dbReference type="SMR" id="C5DT72"/>
<dbReference type="FunCoup" id="C5DT72">
    <property type="interactions" value="126"/>
</dbReference>
<dbReference type="STRING" id="559307.C5DT72"/>
<dbReference type="ESTHER" id="zygrc-kex1">
    <property type="family name" value="Carboxypeptidase_S10"/>
</dbReference>
<dbReference type="MEROPS" id="S10.007"/>
<dbReference type="GlyCosmos" id="C5DT72">
    <property type="glycosylation" value="2 sites, No reported glycans"/>
</dbReference>
<dbReference type="GeneID" id="8203117"/>
<dbReference type="KEGG" id="zro:ZYRO0C06006g"/>
<dbReference type="HOGENOM" id="CLU_008523_11_2_1"/>
<dbReference type="InParanoid" id="C5DT72"/>
<dbReference type="Proteomes" id="UP000008536">
    <property type="component" value="Chromosome C"/>
</dbReference>
<dbReference type="GO" id="GO:0016020">
    <property type="term" value="C:membrane"/>
    <property type="evidence" value="ECO:0007669"/>
    <property type="project" value="UniProtKB-KW"/>
</dbReference>
<dbReference type="GO" id="GO:0005802">
    <property type="term" value="C:trans-Golgi network"/>
    <property type="evidence" value="ECO:0007669"/>
    <property type="project" value="TreeGrafter"/>
</dbReference>
<dbReference type="GO" id="GO:0004185">
    <property type="term" value="F:serine-type carboxypeptidase activity"/>
    <property type="evidence" value="ECO:0007669"/>
    <property type="project" value="UniProtKB-EC"/>
</dbReference>
<dbReference type="GO" id="GO:0006915">
    <property type="term" value="P:apoptotic process"/>
    <property type="evidence" value="ECO:0007669"/>
    <property type="project" value="UniProtKB-KW"/>
</dbReference>
<dbReference type="GO" id="GO:0006508">
    <property type="term" value="P:proteolysis"/>
    <property type="evidence" value="ECO:0007669"/>
    <property type="project" value="UniProtKB-KW"/>
</dbReference>
<dbReference type="Gene3D" id="3.40.50.1820">
    <property type="entry name" value="alpha/beta hydrolase"/>
    <property type="match status" value="1"/>
</dbReference>
<dbReference type="InterPro" id="IPR029058">
    <property type="entry name" value="AB_hydrolase_fold"/>
</dbReference>
<dbReference type="InterPro" id="IPR001563">
    <property type="entry name" value="Peptidase_S10"/>
</dbReference>
<dbReference type="InterPro" id="IPR033124">
    <property type="entry name" value="Ser_caboxypep_his_AS"/>
</dbReference>
<dbReference type="PANTHER" id="PTHR11802:SF190">
    <property type="entry name" value="PHEROMONE-PROCESSING CARBOXYPEPTIDASE KEX1"/>
    <property type="match status" value="1"/>
</dbReference>
<dbReference type="PANTHER" id="PTHR11802">
    <property type="entry name" value="SERINE PROTEASE FAMILY S10 SERINE CARBOXYPEPTIDASE"/>
    <property type="match status" value="1"/>
</dbReference>
<dbReference type="Pfam" id="PF00450">
    <property type="entry name" value="Peptidase_S10"/>
    <property type="match status" value="1"/>
</dbReference>
<dbReference type="PRINTS" id="PR00724">
    <property type="entry name" value="CRBOXYPTASEC"/>
</dbReference>
<dbReference type="SUPFAM" id="SSF53474">
    <property type="entry name" value="alpha/beta-Hydrolases"/>
    <property type="match status" value="1"/>
</dbReference>
<dbReference type="PROSITE" id="PS00560">
    <property type="entry name" value="CARBOXYPEPT_SER_HIS"/>
    <property type="match status" value="1"/>
</dbReference>
<keyword id="KW-0053">Apoptosis</keyword>
<keyword id="KW-0121">Carboxypeptidase</keyword>
<keyword id="KW-0325">Glycoprotein</keyword>
<keyword id="KW-0333">Golgi apparatus</keyword>
<keyword id="KW-0378">Hydrolase</keyword>
<keyword id="KW-0472">Membrane</keyword>
<keyword id="KW-0645">Protease</keyword>
<keyword id="KW-1185">Reference proteome</keyword>
<keyword id="KW-0732">Signal</keyword>
<keyword id="KW-0812">Transmembrane</keyword>
<keyword id="KW-1133">Transmembrane helix</keyword>
<gene>
    <name type="primary">KEX1</name>
    <name type="ordered locus">ZYRO0C06006g</name>
</gene>
<name>KEX1_ZYGRC</name>
<evidence type="ECO:0000250" key="1"/>
<evidence type="ECO:0000255" key="2"/>
<evidence type="ECO:0000255" key="3">
    <source>
        <dbReference type="PROSITE-ProRule" id="PRU10075"/>
    </source>
</evidence>
<evidence type="ECO:0000256" key="4">
    <source>
        <dbReference type="SAM" id="MobiDB-lite"/>
    </source>
</evidence>
<evidence type="ECO:0000305" key="5"/>
<sequence length="684" mass="78284">MRFWYFSAILWVVCQALPSKKQYSVAPELLPGLSEIEDKSTIPEMYAGHMPLAQSNSDDKDEIDYFFWKFSRPDKVLNTLIIWLNGGPGCSSMDGALVENGPFRVNKDLKLVVNEGSWHTRADMLYVDQPVNTGFSVSNSKEKKYDEDLTLTTQHFMDFLESYFKVFPDDQFKDLIIAGESYSGQYVPFLAEAIQKRNAETSDDLAKYNLRGILVGNGWMDPDTQSLAYLPFALSKGLIDQNNPHFSTLLRQQEKCQDRIISRNPNEHQPFQYEECENILQSILTATRDVSADTPSNQVCMNIYSYNLRDSYPACGSNWPDEVLHVPGFFDRPGILEALNLDPSKVPQWKECNLEVYYHLKNRKAVPSVRKLPALLDSGLKVILYNGEMDLLCNERGVLDMIDKLQWGGAKGFSSKTKEYDWNYRDFETNTDHIAGNVLHDRNLTYISVHNASHMVPNDKSLYSRGVVDIYLDDIFLEELHGKDVLVTTSEKDMDDFDNSKLGVLGITDGKPSEEEELEEEFDQYVDELEEGESESGLLDDDKEDETVGATDQNDDKNKGGEDKPNENPDKEKEEQDRQRKRRKGTFKIFGITILVVLTLGSFVFYIYIRKHTNKTRAILIDPSRRQHDSQNKRVSWADDLEHGYDFETDQSQPRSGQSAPKKNGSYTRVPNTELDESFELENL</sequence>
<protein>
    <recommendedName>
        <fullName>Pheromone-processing carboxypeptidase KEX1</fullName>
        <ecNumber>3.4.16.6</ecNumber>
    </recommendedName>
    <alternativeName>
        <fullName>Carboxypeptidase D</fullName>
    </alternativeName>
</protein>
<feature type="signal peptide" evidence="2">
    <location>
        <begin position="1"/>
        <end position="16"/>
    </location>
</feature>
<feature type="chain" id="PRO_0000411957" description="Pheromone-processing carboxypeptidase KEX1">
    <location>
        <begin position="17"/>
        <end position="684"/>
    </location>
</feature>
<feature type="topological domain" description="Lumenal" evidence="2">
    <location>
        <begin position="17"/>
        <end position="588"/>
    </location>
</feature>
<feature type="transmembrane region" description="Helical" evidence="2">
    <location>
        <begin position="589"/>
        <end position="609"/>
    </location>
</feature>
<feature type="topological domain" description="Cytoplasmic" evidence="2">
    <location>
        <begin position="610"/>
        <end position="684"/>
    </location>
</feature>
<feature type="region of interest" description="Disordered" evidence="4">
    <location>
        <begin position="498"/>
        <end position="582"/>
    </location>
</feature>
<feature type="region of interest" description="Disordered" evidence="4">
    <location>
        <begin position="641"/>
        <end position="684"/>
    </location>
</feature>
<feature type="compositionally biased region" description="Acidic residues" evidence="4">
    <location>
        <begin position="514"/>
        <end position="547"/>
    </location>
</feature>
<feature type="compositionally biased region" description="Basic and acidic residues" evidence="4">
    <location>
        <begin position="554"/>
        <end position="578"/>
    </location>
</feature>
<feature type="compositionally biased region" description="Polar residues" evidence="4">
    <location>
        <begin position="650"/>
        <end position="671"/>
    </location>
</feature>
<feature type="compositionally biased region" description="Acidic residues" evidence="4">
    <location>
        <begin position="674"/>
        <end position="684"/>
    </location>
</feature>
<feature type="active site" evidence="3">
    <location>
        <position position="181"/>
    </location>
</feature>
<feature type="active site" evidence="3">
    <location>
        <position position="390"/>
    </location>
</feature>
<feature type="active site" evidence="3">
    <location>
        <position position="454"/>
    </location>
</feature>
<feature type="glycosylation site" description="N-linked (GlcNAc...) asparagine" evidence="2">
    <location>
        <position position="443"/>
    </location>
</feature>
<feature type="glycosylation site" description="N-linked (GlcNAc...) asparagine" evidence="2">
    <location>
        <position position="451"/>
    </location>
</feature>
<accession>C5DT72</accession>